<protein>
    <recommendedName>
        <fullName evidence="1">Probable manganese-dependent inorganic pyrophosphatase</fullName>
        <ecNumber evidence="1">3.6.1.1</ecNumber>
    </recommendedName>
    <alternativeName>
        <fullName evidence="1">Pyrophosphate phospho-hydrolase</fullName>
        <shortName evidence="1">PPase</shortName>
    </alternativeName>
</protein>
<comment type="catalytic activity">
    <reaction evidence="1">
        <text>diphosphate + H2O = 2 phosphate + H(+)</text>
        <dbReference type="Rhea" id="RHEA:24576"/>
        <dbReference type="ChEBI" id="CHEBI:15377"/>
        <dbReference type="ChEBI" id="CHEBI:15378"/>
        <dbReference type="ChEBI" id="CHEBI:33019"/>
        <dbReference type="ChEBI" id="CHEBI:43474"/>
        <dbReference type="EC" id="3.6.1.1"/>
    </reaction>
</comment>
<comment type="cofactor">
    <cofactor evidence="1">
        <name>Mn(2+)</name>
        <dbReference type="ChEBI" id="CHEBI:29035"/>
    </cofactor>
    <text evidence="1">Binds 2 manganese ions per subunit.</text>
</comment>
<comment type="subcellular location">
    <subcellularLocation>
        <location evidence="1">Cytoplasm</location>
    </subcellularLocation>
</comment>
<comment type="similarity">
    <text evidence="1">Belongs to the PPase class C family.</text>
</comment>
<reference key="1">
    <citation type="journal article" date="2001" name="Lancet">
        <title>Whole genome sequencing of meticillin-resistant Staphylococcus aureus.</title>
        <authorList>
            <person name="Kuroda M."/>
            <person name="Ohta T."/>
            <person name="Uchiyama I."/>
            <person name="Baba T."/>
            <person name="Yuzawa H."/>
            <person name="Kobayashi I."/>
            <person name="Cui L."/>
            <person name="Oguchi A."/>
            <person name="Aoki K."/>
            <person name="Nagai Y."/>
            <person name="Lian J.-Q."/>
            <person name="Ito T."/>
            <person name="Kanamori M."/>
            <person name="Matsumaru H."/>
            <person name="Maruyama A."/>
            <person name="Murakami H."/>
            <person name="Hosoyama A."/>
            <person name="Mizutani-Ui Y."/>
            <person name="Takahashi N.K."/>
            <person name="Sawano T."/>
            <person name="Inoue R."/>
            <person name="Kaito C."/>
            <person name="Sekimizu K."/>
            <person name="Hirakawa H."/>
            <person name="Kuhara S."/>
            <person name="Goto S."/>
            <person name="Yabuzaki J."/>
            <person name="Kanehisa M."/>
            <person name="Yamashita A."/>
            <person name="Oshima K."/>
            <person name="Furuya K."/>
            <person name="Yoshino C."/>
            <person name="Shiba T."/>
            <person name="Hattori M."/>
            <person name="Ogasawara N."/>
            <person name="Hayashi H."/>
            <person name="Hiramatsu K."/>
        </authorList>
    </citation>
    <scope>NUCLEOTIDE SEQUENCE [LARGE SCALE GENOMIC DNA]</scope>
    <source>
        <strain>N315</strain>
    </source>
</reference>
<reference key="2">
    <citation type="submission" date="2005-11" db="UniProtKB">
        <title>Shotgun proteomic analysis of total protein extract of S. aureus S30 versus N315.</title>
        <authorList>
            <person name="Stenz L."/>
        </authorList>
    </citation>
    <scope>IDENTIFICATION BY MASS SPECTROMETRY</scope>
</reference>
<reference key="3">
    <citation type="submission" date="2007-10" db="UniProtKB">
        <title>Shotgun proteomic analysis of total and membrane protein extracts of S. aureus strain N315.</title>
        <authorList>
            <person name="Vaezzadeh A.R."/>
            <person name="Deshusses J."/>
            <person name="Lescuyer P."/>
            <person name="Hochstrasser D.F."/>
        </authorList>
    </citation>
    <scope>IDENTIFICATION BY MASS SPECTROMETRY [LARGE SCALE ANALYSIS]</scope>
    <source>
        <strain>N315</strain>
    </source>
</reference>
<name>PPAC_STAAN</name>
<feature type="chain" id="PRO_0000158581" description="Probable manganese-dependent inorganic pyrophosphatase">
    <location>
        <begin position="1"/>
        <end position="309"/>
    </location>
</feature>
<feature type="binding site" evidence="1">
    <location>
        <position position="9"/>
    </location>
    <ligand>
        <name>Mn(2+)</name>
        <dbReference type="ChEBI" id="CHEBI:29035"/>
        <label>1</label>
    </ligand>
</feature>
<feature type="binding site" evidence="1">
    <location>
        <position position="13"/>
    </location>
    <ligand>
        <name>Mn(2+)</name>
        <dbReference type="ChEBI" id="CHEBI:29035"/>
        <label>1</label>
    </ligand>
</feature>
<feature type="binding site" evidence="1">
    <location>
        <position position="15"/>
    </location>
    <ligand>
        <name>Mn(2+)</name>
        <dbReference type="ChEBI" id="CHEBI:29035"/>
        <label>2</label>
    </ligand>
</feature>
<feature type="binding site" evidence="1">
    <location>
        <position position="75"/>
    </location>
    <ligand>
        <name>Mn(2+)</name>
        <dbReference type="ChEBI" id="CHEBI:29035"/>
        <label>1</label>
    </ligand>
</feature>
<feature type="binding site" evidence="1">
    <location>
        <position position="75"/>
    </location>
    <ligand>
        <name>Mn(2+)</name>
        <dbReference type="ChEBI" id="CHEBI:29035"/>
        <label>2</label>
    </ligand>
</feature>
<feature type="binding site" evidence="1">
    <location>
        <position position="97"/>
    </location>
    <ligand>
        <name>Mn(2+)</name>
        <dbReference type="ChEBI" id="CHEBI:29035"/>
        <label>2</label>
    </ligand>
</feature>
<feature type="binding site" evidence="1">
    <location>
        <position position="149"/>
    </location>
    <ligand>
        <name>Mn(2+)</name>
        <dbReference type="ChEBI" id="CHEBI:29035"/>
        <label>2</label>
    </ligand>
</feature>
<keyword id="KW-0963">Cytoplasm</keyword>
<keyword id="KW-0378">Hydrolase</keyword>
<keyword id="KW-0464">Manganese</keyword>
<keyword id="KW-0479">Metal-binding</keyword>
<gene>
    <name evidence="1" type="primary">ppaC</name>
    <name type="ordered locus">SA1735</name>
</gene>
<dbReference type="EC" id="3.6.1.1" evidence="1"/>
<dbReference type="EMBL" id="BA000018">
    <property type="protein sequence ID" value="BAB43005.1"/>
    <property type="molecule type" value="Genomic_DNA"/>
</dbReference>
<dbReference type="PIR" id="F89980">
    <property type="entry name" value="F89980"/>
</dbReference>
<dbReference type="RefSeq" id="WP_001140871.1">
    <property type="nucleotide sequence ID" value="NC_002745.2"/>
</dbReference>
<dbReference type="SMR" id="P65753"/>
<dbReference type="EnsemblBacteria" id="BAB43005">
    <property type="protein sequence ID" value="BAB43005"/>
    <property type="gene ID" value="BAB43005"/>
</dbReference>
<dbReference type="KEGG" id="sau:SA1735"/>
<dbReference type="HOGENOM" id="CLU_025243_0_1_9"/>
<dbReference type="GO" id="GO:0005737">
    <property type="term" value="C:cytoplasm"/>
    <property type="evidence" value="ECO:0007669"/>
    <property type="project" value="UniProtKB-SubCell"/>
</dbReference>
<dbReference type="GO" id="GO:0004427">
    <property type="term" value="F:inorganic diphosphate phosphatase activity"/>
    <property type="evidence" value="ECO:0007669"/>
    <property type="project" value="UniProtKB-UniRule"/>
</dbReference>
<dbReference type="GO" id="GO:0030145">
    <property type="term" value="F:manganese ion binding"/>
    <property type="evidence" value="ECO:0007669"/>
    <property type="project" value="UniProtKB-UniRule"/>
</dbReference>
<dbReference type="FunFam" id="3.10.310.20:FF:000001">
    <property type="entry name" value="Probable manganese-dependent inorganic pyrophosphatase"/>
    <property type="match status" value="1"/>
</dbReference>
<dbReference type="FunFam" id="3.90.1640.10:FF:000001">
    <property type="entry name" value="Probable manganese-dependent inorganic pyrophosphatase"/>
    <property type="match status" value="1"/>
</dbReference>
<dbReference type="Gene3D" id="3.10.310.20">
    <property type="entry name" value="DHHA2 domain"/>
    <property type="match status" value="1"/>
</dbReference>
<dbReference type="Gene3D" id="3.90.1640.10">
    <property type="entry name" value="inorganic pyrophosphatase (n-terminal core)"/>
    <property type="match status" value="1"/>
</dbReference>
<dbReference type="HAMAP" id="MF_00207">
    <property type="entry name" value="PPase_C"/>
    <property type="match status" value="1"/>
</dbReference>
<dbReference type="InterPro" id="IPR001667">
    <property type="entry name" value="DDH_dom"/>
</dbReference>
<dbReference type="InterPro" id="IPR038763">
    <property type="entry name" value="DHH_sf"/>
</dbReference>
<dbReference type="InterPro" id="IPR004097">
    <property type="entry name" value="DHHA2"/>
</dbReference>
<dbReference type="InterPro" id="IPR038222">
    <property type="entry name" value="DHHA2_dom_sf"/>
</dbReference>
<dbReference type="InterPro" id="IPR022934">
    <property type="entry name" value="Mn-dep_inorganic_PyrPase"/>
</dbReference>
<dbReference type="NCBIfam" id="NF003877">
    <property type="entry name" value="PRK05427.1"/>
    <property type="match status" value="1"/>
</dbReference>
<dbReference type="PANTHER" id="PTHR12112">
    <property type="entry name" value="BNIP - RELATED"/>
    <property type="match status" value="1"/>
</dbReference>
<dbReference type="PANTHER" id="PTHR12112:SF22">
    <property type="entry name" value="MANGANESE-DEPENDENT INORGANIC PYROPHOSPHATASE-RELATED"/>
    <property type="match status" value="1"/>
</dbReference>
<dbReference type="Pfam" id="PF01368">
    <property type="entry name" value="DHH"/>
    <property type="match status" value="1"/>
</dbReference>
<dbReference type="Pfam" id="PF02833">
    <property type="entry name" value="DHHA2"/>
    <property type="match status" value="1"/>
</dbReference>
<dbReference type="SMART" id="SM01131">
    <property type="entry name" value="DHHA2"/>
    <property type="match status" value="1"/>
</dbReference>
<dbReference type="SUPFAM" id="SSF64182">
    <property type="entry name" value="DHH phosphoesterases"/>
    <property type="match status" value="1"/>
</dbReference>
<sequence length="309" mass="34069">MAKTYIFGHKNPDTDAISSAIIMAEFEQLRGNSGAKAYRLGDVSAETQFALDTFNVPAPELLTDDLDGQDVILVDHNEFQQSSDTIASATIKHVIDHHRIANFETAGPLCYRAEPVGCTATILYKMFRERGFEIKPEIAGLMLSAIISDSLLFKSPTCTQQDVKAAEELKDIAKVDIQKYGLDMLKAGASTTDKSVEFLLNMDAKSFTMGDYVTRIAQVNAVDLDEVLNRKEDLEKEMLAVSAQEKYDLFVLVVTDIINSDSKILVVGAEKDKVGEAFNVQLEDDMAFLSGVVSRKKQIVPQITEALTK</sequence>
<accession>P65753</accession>
<accession>Q99SW8</accession>
<evidence type="ECO:0000255" key="1">
    <source>
        <dbReference type="HAMAP-Rule" id="MF_00207"/>
    </source>
</evidence>
<proteinExistence type="evidence at protein level"/>
<organism>
    <name type="scientific">Staphylococcus aureus (strain N315)</name>
    <dbReference type="NCBI Taxonomy" id="158879"/>
    <lineage>
        <taxon>Bacteria</taxon>
        <taxon>Bacillati</taxon>
        <taxon>Bacillota</taxon>
        <taxon>Bacilli</taxon>
        <taxon>Bacillales</taxon>
        <taxon>Staphylococcaceae</taxon>
        <taxon>Staphylococcus</taxon>
    </lineage>
</organism>